<evidence type="ECO:0000250" key="1"/>
<evidence type="ECO:0000255" key="2"/>
<evidence type="ECO:0000255" key="3">
    <source>
        <dbReference type="PROSITE-ProRule" id="PRU01058"/>
    </source>
</evidence>
<keyword id="KW-0496">Mitochondrion</keyword>
<keyword id="KW-1185">Reference proteome</keyword>
<keyword id="KW-0809">Transit peptide</keyword>
<reference key="1">
    <citation type="journal article" date="2004" name="Science">
        <title>The Ashbya gossypii genome as a tool for mapping the ancient Saccharomyces cerevisiae genome.</title>
        <authorList>
            <person name="Dietrich F.S."/>
            <person name="Voegeli S."/>
            <person name="Brachat S."/>
            <person name="Lerch A."/>
            <person name="Gates K."/>
            <person name="Steiner S."/>
            <person name="Mohr C."/>
            <person name="Poehlmann R."/>
            <person name="Luedi P."/>
            <person name="Choi S."/>
            <person name="Wing R.A."/>
            <person name="Flavier A."/>
            <person name="Gaffney T.D."/>
            <person name="Philippsen P."/>
        </authorList>
    </citation>
    <scope>NUCLEOTIDE SEQUENCE [LARGE SCALE GENOMIC DNA]</scope>
    <source>
        <strain>ATCC 10895 / CBS 109.51 / FGSC 9923 / NRRL Y-1056</strain>
    </source>
</reference>
<reference key="2">
    <citation type="journal article" date="2013" name="G3 (Bethesda)">
        <title>Genomes of Ashbya fungi isolated from insects reveal four mating-type loci, numerous translocations, lack of transposons, and distinct gene duplications.</title>
        <authorList>
            <person name="Dietrich F.S."/>
            <person name="Voegeli S."/>
            <person name="Kuo S."/>
            <person name="Philippsen P."/>
        </authorList>
    </citation>
    <scope>GENOME REANNOTATION</scope>
    <source>
        <strain>ATCC 10895 / CBS 109.51 / FGSC 9923 / NRRL Y-1056</strain>
    </source>
</reference>
<name>GEP3_EREGS</name>
<proteinExistence type="inferred from homology"/>
<dbReference type="EMBL" id="AE016817">
    <property type="protein sequence ID" value="AAS51642.2"/>
    <property type="molecule type" value="Genomic_DNA"/>
</dbReference>
<dbReference type="RefSeq" id="NP_983818.2">
    <property type="nucleotide sequence ID" value="NM_209171.2"/>
</dbReference>
<dbReference type="FunCoup" id="Q75B55">
    <property type="interactions" value="100"/>
</dbReference>
<dbReference type="STRING" id="284811.Q75B55"/>
<dbReference type="EnsemblFungi" id="AAS51642">
    <property type="protein sequence ID" value="AAS51642"/>
    <property type="gene ID" value="AGOS_ADL278C"/>
</dbReference>
<dbReference type="GeneID" id="4619953"/>
<dbReference type="KEGG" id="ago:AGOS_ADL278C"/>
<dbReference type="eggNOG" id="ENOG502S0UP">
    <property type="taxonomic scope" value="Eukaryota"/>
</dbReference>
<dbReference type="HOGENOM" id="CLU_025792_1_0_1"/>
<dbReference type="InParanoid" id="Q75B55"/>
<dbReference type="OMA" id="IIPPFYG"/>
<dbReference type="OrthoDB" id="1696305at2759"/>
<dbReference type="Proteomes" id="UP000000591">
    <property type="component" value="Chromosome IV"/>
</dbReference>
<dbReference type="GO" id="GO:0005743">
    <property type="term" value="C:mitochondrial inner membrane"/>
    <property type="evidence" value="ECO:0007669"/>
    <property type="project" value="EnsemblFungi"/>
</dbReference>
<dbReference type="GO" id="GO:0005739">
    <property type="term" value="C:mitochondrion"/>
    <property type="evidence" value="ECO:0000318"/>
    <property type="project" value="GO_Central"/>
</dbReference>
<dbReference type="GO" id="GO:0005525">
    <property type="term" value="F:GTP binding"/>
    <property type="evidence" value="ECO:0007669"/>
    <property type="project" value="InterPro"/>
</dbReference>
<dbReference type="GO" id="GO:0030490">
    <property type="term" value="P:maturation of SSU-rRNA"/>
    <property type="evidence" value="ECO:0007669"/>
    <property type="project" value="EnsemblFungi"/>
</dbReference>
<dbReference type="Gene3D" id="3.40.50.300">
    <property type="entry name" value="P-loop containing nucleotide triphosphate hydrolases"/>
    <property type="match status" value="1"/>
</dbReference>
<dbReference type="InterPro" id="IPR030378">
    <property type="entry name" value="G_CP_dom"/>
</dbReference>
<dbReference type="InterPro" id="IPR050896">
    <property type="entry name" value="Mito_lipid_metab_GTPase"/>
</dbReference>
<dbReference type="InterPro" id="IPR027417">
    <property type="entry name" value="P-loop_NTPase"/>
</dbReference>
<dbReference type="PANTHER" id="PTHR46434">
    <property type="entry name" value="GENETIC INTERACTOR OF PROHIBITINS 3, MITOCHONDRIAL"/>
    <property type="match status" value="1"/>
</dbReference>
<dbReference type="PANTHER" id="PTHR46434:SF1">
    <property type="entry name" value="GENETIC INTERACTOR OF PROHIBITINS 3, MITOCHONDRIAL"/>
    <property type="match status" value="1"/>
</dbReference>
<dbReference type="SUPFAM" id="SSF52540">
    <property type="entry name" value="P-loop containing nucleoside triphosphate hydrolases"/>
    <property type="match status" value="1"/>
</dbReference>
<dbReference type="PROSITE" id="PS51721">
    <property type="entry name" value="G_CP"/>
    <property type="match status" value="1"/>
</dbReference>
<protein>
    <recommendedName>
        <fullName>Genetic interactor of prohibitins 3, mitochondrial</fullName>
    </recommendedName>
    <alternativeName>
        <fullName>Found in mitochondrial proteome protein 38</fullName>
    </alternativeName>
</protein>
<comment type="function">
    <text evidence="1">May be involved in the mitochondrial lipid metabolism.</text>
</comment>
<comment type="subcellular location">
    <subcellularLocation>
        <location evidence="1">Mitochondrion</location>
    </subcellularLocation>
</comment>
<comment type="similarity">
    <text evidence="3">Belongs to the TRAFAC class YlqF/YawG GTPase family. GEP3 subfamily.</text>
</comment>
<feature type="transit peptide" description="Mitochondrion" evidence="2">
    <location>
        <begin position="1"/>
        <end position="22"/>
    </location>
</feature>
<feature type="chain" id="PRO_0000409627" description="Genetic interactor of prohibitins 3, mitochondrial">
    <location>
        <begin position="23"/>
        <end position="547"/>
    </location>
</feature>
<feature type="domain" description="CP-type G" evidence="3">
    <location>
        <begin position="105"/>
        <end position="290"/>
    </location>
</feature>
<gene>
    <name type="primary">GEP3</name>
    <name type="synonym">FMP48</name>
    <name type="ordered locus">ADL278C</name>
</gene>
<accession>Q75B55</accession>
<sequence>MLRRSLSVVFGRRTIACKSCGIELQNKIKDGPGYFVTPQKAIRPAAKQLELAKQLLYGERLRIEKQLTGPDRNTLEKWKELVPPSCKRCMDALHHNRYDTAEFPEHTLEDVGKGVPRDAVVYHIAPLWQFPMGLDRRVLQSSKKVCVLFSKIDMVVQRPSHMPQDVGAFFQSLLYHDLHVKITNFRFFSALKQWNIQTVRNALSKESYLLGGPNAGKSSLINALMRTVVYESRRLVSSKQSSATPADLPPKAHLDIHSAGVSTIPNFTRQPQQYDIKGKIIHDVPGYRTSKSHTFDFNSMIQKDYLLRLRKSDSKTYLTKKYTSINGTESGRCYTVGGLFYYVPPAQTINQVTRYMPGDPQKFQSIDKGLEVVRDVYSDRWDKETGSHPLAEYIHVNPALGDKNSFVRHVIPPFQGTIEIVMRDVGYLRVVATGSFKFLGLHEIWVPKGIEVSVREPLTDVFRTTIEAYRDSGSVANVAQMIIKRPYISSTYPMAHNETDPLAKMREMYLERTASNLSARRLMNRDPLELISQKQKERVNLYWHYCW</sequence>
<organism>
    <name type="scientific">Eremothecium gossypii (strain ATCC 10895 / CBS 109.51 / FGSC 9923 / NRRL Y-1056)</name>
    <name type="common">Yeast</name>
    <name type="synonym">Ashbya gossypii</name>
    <dbReference type="NCBI Taxonomy" id="284811"/>
    <lineage>
        <taxon>Eukaryota</taxon>
        <taxon>Fungi</taxon>
        <taxon>Dikarya</taxon>
        <taxon>Ascomycota</taxon>
        <taxon>Saccharomycotina</taxon>
        <taxon>Saccharomycetes</taxon>
        <taxon>Saccharomycetales</taxon>
        <taxon>Saccharomycetaceae</taxon>
        <taxon>Eremothecium</taxon>
    </lineage>
</organism>